<proteinExistence type="inferred from homology"/>
<sequence>MTAIAPVITIDGPSGAGKGTLCKAMAEALQWHLLDSGAIYRVLALAALHHHVDVASEDALVPLASHLDVRFVSTNGNLEVILEGEDVSGEIRTQEVANAASQVAAFPRVREALLRRQRAFRELPGLIADGRDMGTVVFPDAPVKIFLDASSEERAHRRMLQLQEKGFSVNFERLLAEIKERDDRDRNRAVAPLVPAADALVLDSTTLSIEQVIEKALQYARQKLALA</sequence>
<comment type="catalytic activity">
    <reaction evidence="1">
        <text>CMP + ATP = CDP + ADP</text>
        <dbReference type="Rhea" id="RHEA:11600"/>
        <dbReference type="ChEBI" id="CHEBI:30616"/>
        <dbReference type="ChEBI" id="CHEBI:58069"/>
        <dbReference type="ChEBI" id="CHEBI:60377"/>
        <dbReference type="ChEBI" id="CHEBI:456216"/>
        <dbReference type="EC" id="2.7.4.25"/>
    </reaction>
</comment>
<comment type="catalytic activity">
    <reaction evidence="1">
        <text>dCMP + ATP = dCDP + ADP</text>
        <dbReference type="Rhea" id="RHEA:25094"/>
        <dbReference type="ChEBI" id="CHEBI:30616"/>
        <dbReference type="ChEBI" id="CHEBI:57566"/>
        <dbReference type="ChEBI" id="CHEBI:58593"/>
        <dbReference type="ChEBI" id="CHEBI:456216"/>
        <dbReference type="EC" id="2.7.4.25"/>
    </reaction>
</comment>
<comment type="subcellular location">
    <subcellularLocation>
        <location evidence="1">Cytoplasm</location>
    </subcellularLocation>
</comment>
<comment type="similarity">
    <text evidence="1">Belongs to the cytidylate kinase family. Type 1 subfamily.</text>
</comment>
<gene>
    <name evidence="1" type="primary">cmk</name>
    <name type="ordered locus">EcolC_2686</name>
</gene>
<reference key="1">
    <citation type="submission" date="2008-02" db="EMBL/GenBank/DDBJ databases">
        <title>Complete sequence of Escherichia coli C str. ATCC 8739.</title>
        <authorList>
            <person name="Copeland A."/>
            <person name="Lucas S."/>
            <person name="Lapidus A."/>
            <person name="Glavina del Rio T."/>
            <person name="Dalin E."/>
            <person name="Tice H."/>
            <person name="Bruce D."/>
            <person name="Goodwin L."/>
            <person name="Pitluck S."/>
            <person name="Kiss H."/>
            <person name="Brettin T."/>
            <person name="Detter J.C."/>
            <person name="Han C."/>
            <person name="Kuske C.R."/>
            <person name="Schmutz J."/>
            <person name="Larimer F."/>
            <person name="Land M."/>
            <person name="Hauser L."/>
            <person name="Kyrpides N."/>
            <person name="Mikhailova N."/>
            <person name="Ingram L."/>
            <person name="Richardson P."/>
        </authorList>
    </citation>
    <scope>NUCLEOTIDE SEQUENCE [LARGE SCALE GENOMIC DNA]</scope>
    <source>
        <strain>ATCC 8739 / DSM 1576 / NBRC 3972 / NCIMB 8545 / WDCM 00012 / Crooks</strain>
    </source>
</reference>
<accession>B1IW21</accession>
<dbReference type="EC" id="2.7.4.25" evidence="1"/>
<dbReference type="EMBL" id="CP000946">
    <property type="protein sequence ID" value="ACA78315.1"/>
    <property type="molecule type" value="Genomic_DNA"/>
</dbReference>
<dbReference type="RefSeq" id="WP_000125016.1">
    <property type="nucleotide sequence ID" value="NZ_MTFT01000009.1"/>
</dbReference>
<dbReference type="SMR" id="B1IW21"/>
<dbReference type="GeneID" id="93776507"/>
<dbReference type="KEGG" id="ecl:EcolC_2686"/>
<dbReference type="HOGENOM" id="CLU_079959_0_2_6"/>
<dbReference type="GO" id="GO:0005829">
    <property type="term" value="C:cytosol"/>
    <property type="evidence" value="ECO:0007669"/>
    <property type="project" value="TreeGrafter"/>
</dbReference>
<dbReference type="GO" id="GO:0005524">
    <property type="term" value="F:ATP binding"/>
    <property type="evidence" value="ECO:0007669"/>
    <property type="project" value="UniProtKB-UniRule"/>
</dbReference>
<dbReference type="GO" id="GO:0036430">
    <property type="term" value="F:CMP kinase activity"/>
    <property type="evidence" value="ECO:0007669"/>
    <property type="project" value="RHEA"/>
</dbReference>
<dbReference type="GO" id="GO:0036431">
    <property type="term" value="F:dCMP kinase activity"/>
    <property type="evidence" value="ECO:0007669"/>
    <property type="project" value="RHEA"/>
</dbReference>
<dbReference type="GO" id="GO:0015949">
    <property type="term" value="P:nucleobase-containing small molecule interconversion"/>
    <property type="evidence" value="ECO:0007669"/>
    <property type="project" value="TreeGrafter"/>
</dbReference>
<dbReference type="GO" id="GO:0006220">
    <property type="term" value="P:pyrimidine nucleotide metabolic process"/>
    <property type="evidence" value="ECO:0007669"/>
    <property type="project" value="UniProtKB-UniRule"/>
</dbReference>
<dbReference type="CDD" id="cd02020">
    <property type="entry name" value="CMPK"/>
    <property type="match status" value="1"/>
</dbReference>
<dbReference type="FunFam" id="3.40.50.300:FF:000262">
    <property type="entry name" value="Cytidylate kinase"/>
    <property type="match status" value="1"/>
</dbReference>
<dbReference type="Gene3D" id="3.40.50.300">
    <property type="entry name" value="P-loop containing nucleotide triphosphate hydrolases"/>
    <property type="match status" value="1"/>
</dbReference>
<dbReference type="HAMAP" id="MF_00238">
    <property type="entry name" value="Cytidyl_kinase_type1"/>
    <property type="match status" value="1"/>
</dbReference>
<dbReference type="InterPro" id="IPR003136">
    <property type="entry name" value="Cytidylate_kin"/>
</dbReference>
<dbReference type="InterPro" id="IPR011994">
    <property type="entry name" value="Cytidylate_kinase_dom"/>
</dbReference>
<dbReference type="InterPro" id="IPR027417">
    <property type="entry name" value="P-loop_NTPase"/>
</dbReference>
<dbReference type="NCBIfam" id="TIGR00017">
    <property type="entry name" value="cmk"/>
    <property type="match status" value="1"/>
</dbReference>
<dbReference type="PANTHER" id="PTHR21299:SF2">
    <property type="entry name" value="CYTIDYLATE KINASE"/>
    <property type="match status" value="1"/>
</dbReference>
<dbReference type="PANTHER" id="PTHR21299">
    <property type="entry name" value="CYTIDYLATE KINASE/PANTOATE-BETA-ALANINE LIGASE"/>
    <property type="match status" value="1"/>
</dbReference>
<dbReference type="Pfam" id="PF02224">
    <property type="entry name" value="Cytidylate_kin"/>
    <property type="match status" value="1"/>
</dbReference>
<dbReference type="SUPFAM" id="SSF52540">
    <property type="entry name" value="P-loop containing nucleoside triphosphate hydrolases"/>
    <property type="match status" value="1"/>
</dbReference>
<evidence type="ECO:0000255" key="1">
    <source>
        <dbReference type="HAMAP-Rule" id="MF_00238"/>
    </source>
</evidence>
<organism>
    <name type="scientific">Escherichia coli (strain ATCC 8739 / DSM 1576 / NBRC 3972 / NCIMB 8545 / WDCM 00012 / Crooks)</name>
    <dbReference type="NCBI Taxonomy" id="481805"/>
    <lineage>
        <taxon>Bacteria</taxon>
        <taxon>Pseudomonadati</taxon>
        <taxon>Pseudomonadota</taxon>
        <taxon>Gammaproteobacteria</taxon>
        <taxon>Enterobacterales</taxon>
        <taxon>Enterobacteriaceae</taxon>
        <taxon>Escherichia</taxon>
    </lineage>
</organism>
<feature type="chain" id="PRO_1000078338" description="Cytidylate kinase">
    <location>
        <begin position="1"/>
        <end position="227"/>
    </location>
</feature>
<feature type="binding site" evidence="1">
    <location>
        <begin position="12"/>
        <end position="20"/>
    </location>
    <ligand>
        <name>ATP</name>
        <dbReference type="ChEBI" id="CHEBI:30616"/>
    </ligand>
</feature>
<protein>
    <recommendedName>
        <fullName evidence="1">Cytidylate kinase</fullName>
        <shortName evidence="1">CK</shortName>
        <ecNumber evidence="1">2.7.4.25</ecNumber>
    </recommendedName>
    <alternativeName>
        <fullName evidence="1">Cytidine monophosphate kinase</fullName>
        <shortName evidence="1">CMP kinase</shortName>
    </alternativeName>
</protein>
<keyword id="KW-0067">ATP-binding</keyword>
<keyword id="KW-0963">Cytoplasm</keyword>
<keyword id="KW-0418">Kinase</keyword>
<keyword id="KW-0547">Nucleotide-binding</keyword>
<keyword id="KW-0808">Transferase</keyword>
<name>KCY_ECOLC</name>